<comment type="function">
    <text>DNA polymerase III is a complex, multichain enzyme responsible for most of the replicative synthesis in bacteria.</text>
</comment>
<comment type="catalytic activity">
    <reaction>
        <text>DNA(n) + a 2'-deoxyribonucleoside 5'-triphosphate = DNA(n+1) + diphosphate</text>
        <dbReference type="Rhea" id="RHEA:22508"/>
        <dbReference type="Rhea" id="RHEA-COMP:17339"/>
        <dbReference type="Rhea" id="RHEA-COMP:17340"/>
        <dbReference type="ChEBI" id="CHEBI:33019"/>
        <dbReference type="ChEBI" id="CHEBI:61560"/>
        <dbReference type="ChEBI" id="CHEBI:173112"/>
        <dbReference type="EC" id="2.7.7.7"/>
    </reaction>
</comment>
<comment type="subunit">
    <text evidence="1 3">Component of the DNA clamp loading complex consisting of tau(3):delta(1):delta'(1) (PubMed:23525462). The DNA polymerase III holoenzyme complex contains at least 10 different subunits organized into 3 functionally essential subassemblies: the Pol III core, the beta sliding clamp processivity factor and the clamp-loading complex. The Pol III core (subunits alpha, epsilon and theta) contains the polymerase and the 3'-5' exonuclease proofreading activities. The polymerase is tethered to the template via the dimeric beta sliding clamp processivity factor. The DNA clamp-loading complex assembles the beta sliding clamp onto the primed template and plays a central role in the organization and communication at the replication fork (By similarity).</text>
</comment>
<comment type="subcellular location">
    <subcellularLocation>
        <location evidence="2">Cytoplasm</location>
        <location evidence="2">Nucleoid</location>
    </subcellularLocation>
    <text evidence="2">Localizes in tight foci to the chromosomal replication center at mid-cell; positioning does not rely on the C-terminus of SSB (ssbA) (PubMed:21170359).</text>
</comment>
<dbReference type="EC" id="2.7.7.7"/>
<dbReference type="EMBL" id="D26185">
    <property type="protein sequence ID" value="BAA05267.1"/>
    <property type="molecule type" value="Genomic_DNA"/>
</dbReference>
<dbReference type="EMBL" id="AL009126">
    <property type="protein sequence ID" value="CAB11807.1"/>
    <property type="molecule type" value="Genomic_DNA"/>
</dbReference>
<dbReference type="PIR" id="S66061">
    <property type="entry name" value="S66061"/>
</dbReference>
<dbReference type="RefSeq" id="NP_387912.1">
    <property type="nucleotide sequence ID" value="NC_000964.3"/>
</dbReference>
<dbReference type="RefSeq" id="WP_003244417.1">
    <property type="nucleotide sequence ID" value="NZ_OZ025638.1"/>
</dbReference>
<dbReference type="SMR" id="P37540"/>
<dbReference type="FunCoup" id="P37540">
    <property type="interactions" value="172"/>
</dbReference>
<dbReference type="IntAct" id="P37540">
    <property type="interactions" value="2"/>
</dbReference>
<dbReference type="STRING" id="224308.BSU00310"/>
<dbReference type="PaxDb" id="224308-BSU00310"/>
<dbReference type="EnsemblBacteria" id="CAB11807">
    <property type="protein sequence ID" value="CAB11807"/>
    <property type="gene ID" value="BSU_00310"/>
</dbReference>
<dbReference type="GeneID" id="935949"/>
<dbReference type="KEGG" id="bsu:BSU00310"/>
<dbReference type="PATRIC" id="fig|224308.179.peg.31"/>
<dbReference type="eggNOG" id="COG0470">
    <property type="taxonomic scope" value="Bacteria"/>
</dbReference>
<dbReference type="InParanoid" id="P37540"/>
<dbReference type="OrthoDB" id="9810148at2"/>
<dbReference type="PhylomeDB" id="P37540"/>
<dbReference type="BioCyc" id="BSUB:BSU00310-MONOMER"/>
<dbReference type="Proteomes" id="UP000001570">
    <property type="component" value="Chromosome"/>
</dbReference>
<dbReference type="GO" id="GO:0005737">
    <property type="term" value="C:cytoplasm"/>
    <property type="evidence" value="ECO:0007669"/>
    <property type="project" value="UniProtKB-KW"/>
</dbReference>
<dbReference type="GO" id="GO:0009360">
    <property type="term" value="C:DNA polymerase III complex"/>
    <property type="evidence" value="ECO:0007669"/>
    <property type="project" value="InterPro"/>
</dbReference>
<dbReference type="GO" id="GO:0009295">
    <property type="term" value="C:nucleoid"/>
    <property type="evidence" value="ECO:0007669"/>
    <property type="project" value="UniProtKB-SubCell"/>
</dbReference>
<dbReference type="GO" id="GO:0008408">
    <property type="term" value="F:3'-5' exonuclease activity"/>
    <property type="evidence" value="ECO:0007669"/>
    <property type="project" value="InterPro"/>
</dbReference>
<dbReference type="GO" id="GO:0003677">
    <property type="term" value="F:DNA binding"/>
    <property type="evidence" value="ECO:0007669"/>
    <property type="project" value="InterPro"/>
</dbReference>
<dbReference type="GO" id="GO:0003887">
    <property type="term" value="F:DNA-directed DNA polymerase activity"/>
    <property type="evidence" value="ECO:0007669"/>
    <property type="project" value="UniProtKB-KW"/>
</dbReference>
<dbReference type="GO" id="GO:0006261">
    <property type="term" value="P:DNA-templated DNA replication"/>
    <property type="evidence" value="ECO:0000318"/>
    <property type="project" value="GO_Central"/>
</dbReference>
<dbReference type="FunFam" id="3.40.50.300:FF:001255">
    <property type="entry name" value="DNA polymerase III subunit delta"/>
    <property type="match status" value="1"/>
</dbReference>
<dbReference type="Gene3D" id="3.40.50.300">
    <property type="entry name" value="P-loop containing nucleotide triphosphate hydrolases"/>
    <property type="match status" value="1"/>
</dbReference>
<dbReference type="InterPro" id="IPR004622">
    <property type="entry name" value="DNA_pol_HolB"/>
</dbReference>
<dbReference type="InterPro" id="IPR015199">
    <property type="entry name" value="DNA_pol_III_delta_C"/>
</dbReference>
<dbReference type="InterPro" id="IPR050238">
    <property type="entry name" value="DNA_Rep/Repair_Clamp_Loader"/>
</dbReference>
<dbReference type="InterPro" id="IPR027417">
    <property type="entry name" value="P-loop_NTPase"/>
</dbReference>
<dbReference type="NCBIfam" id="TIGR00678">
    <property type="entry name" value="holB"/>
    <property type="match status" value="1"/>
</dbReference>
<dbReference type="NCBIfam" id="NF005972">
    <property type="entry name" value="PRK08058.1"/>
    <property type="match status" value="1"/>
</dbReference>
<dbReference type="PANTHER" id="PTHR11669:SF8">
    <property type="entry name" value="DNA POLYMERASE III SUBUNIT DELTA"/>
    <property type="match status" value="1"/>
</dbReference>
<dbReference type="PANTHER" id="PTHR11669">
    <property type="entry name" value="REPLICATION FACTOR C / DNA POLYMERASE III GAMMA-TAU SUBUNIT"/>
    <property type="match status" value="1"/>
</dbReference>
<dbReference type="Pfam" id="PF13177">
    <property type="entry name" value="DNA_pol3_delta2"/>
    <property type="match status" value="1"/>
</dbReference>
<dbReference type="Pfam" id="PF09115">
    <property type="entry name" value="DNApol3-delta_C"/>
    <property type="match status" value="1"/>
</dbReference>
<dbReference type="SUPFAM" id="SSF52540">
    <property type="entry name" value="P-loop containing nucleoside triphosphate hydrolases"/>
    <property type="match status" value="1"/>
</dbReference>
<keyword id="KW-0963">Cytoplasm</keyword>
<keyword id="KW-0235">DNA replication</keyword>
<keyword id="KW-0239">DNA-directed DNA polymerase</keyword>
<keyword id="KW-0548">Nucleotidyltransferase</keyword>
<keyword id="KW-1185">Reference proteome</keyword>
<keyword id="KW-0808">Transferase</keyword>
<gene>
    <name type="primary">holB</name>
    <name type="synonym">yaaS</name>
    <name type="ordered locus">BSU00310</name>
</gene>
<name>HOLB_BACSU</name>
<sequence length="329" mass="37621">MAISWKEMNELQPRVMKLLYNSIEKDRLSHAYLFEGKKGTGKLDAALLLAKSFFCLEGGAEPCESCRNCKRIESGNHPDLHLVQPDGLSIKKAQIQALQEEFSKTGLESHKKLYIISHADQMTANAANSLLKFLEEPNKDTMAVLITEQPQRLLDTIISRCQTLPFQPLQPKAIEDRLIEQDVSPHMARLLANMTNNVAEAVELSRNDEFAESRAKVIKLYEVLHQRKGHAFFFIQDQWMPFFKEKTHQEMGLDMLLLIYRDVLSIQIGNEDKLIYQDLFQSIKQHALQSTQQSVTNQILAVLEAKKRLHSNVNVQGLMEHLVLMLQEG</sequence>
<accession>P37540</accession>
<feature type="chain" id="PRO_0000105509" description="DNA polymerase III subunit delta'">
    <location>
        <begin position="1"/>
        <end position="329"/>
    </location>
</feature>
<proteinExistence type="evidence at protein level"/>
<organism>
    <name type="scientific">Bacillus subtilis (strain 168)</name>
    <dbReference type="NCBI Taxonomy" id="224308"/>
    <lineage>
        <taxon>Bacteria</taxon>
        <taxon>Bacillati</taxon>
        <taxon>Bacillota</taxon>
        <taxon>Bacilli</taxon>
        <taxon>Bacillales</taxon>
        <taxon>Bacillaceae</taxon>
        <taxon>Bacillus</taxon>
    </lineage>
</organism>
<protein>
    <recommendedName>
        <fullName>DNA polymerase III subunit delta'</fullName>
        <ecNumber>2.7.7.7</ecNumber>
    </recommendedName>
</protein>
<reference key="1">
    <citation type="journal article" date="1994" name="DNA Res.">
        <title>Systematic sequencing of the 180 kilobase region of the Bacillus subtilis chromosome containing the replication origin.</title>
        <authorList>
            <person name="Ogasawara N."/>
            <person name="Nakai S."/>
            <person name="Yoshikawa H."/>
        </authorList>
    </citation>
    <scope>NUCLEOTIDE SEQUENCE [GENOMIC DNA]</scope>
    <source>
        <strain>168</strain>
    </source>
</reference>
<reference key="2">
    <citation type="journal article" date="1997" name="Nature">
        <title>The complete genome sequence of the Gram-positive bacterium Bacillus subtilis.</title>
        <authorList>
            <person name="Kunst F."/>
            <person name="Ogasawara N."/>
            <person name="Moszer I."/>
            <person name="Albertini A.M."/>
            <person name="Alloni G."/>
            <person name="Azevedo V."/>
            <person name="Bertero M.G."/>
            <person name="Bessieres P."/>
            <person name="Bolotin A."/>
            <person name="Borchert S."/>
            <person name="Borriss R."/>
            <person name="Boursier L."/>
            <person name="Brans A."/>
            <person name="Braun M."/>
            <person name="Brignell S.C."/>
            <person name="Bron S."/>
            <person name="Brouillet S."/>
            <person name="Bruschi C.V."/>
            <person name="Caldwell B."/>
            <person name="Capuano V."/>
            <person name="Carter N.M."/>
            <person name="Choi S.-K."/>
            <person name="Codani J.-J."/>
            <person name="Connerton I.F."/>
            <person name="Cummings N.J."/>
            <person name="Daniel R.A."/>
            <person name="Denizot F."/>
            <person name="Devine K.M."/>
            <person name="Duesterhoeft A."/>
            <person name="Ehrlich S.D."/>
            <person name="Emmerson P.T."/>
            <person name="Entian K.-D."/>
            <person name="Errington J."/>
            <person name="Fabret C."/>
            <person name="Ferrari E."/>
            <person name="Foulger D."/>
            <person name="Fritz C."/>
            <person name="Fujita M."/>
            <person name="Fujita Y."/>
            <person name="Fuma S."/>
            <person name="Galizzi A."/>
            <person name="Galleron N."/>
            <person name="Ghim S.-Y."/>
            <person name="Glaser P."/>
            <person name="Goffeau A."/>
            <person name="Golightly E.J."/>
            <person name="Grandi G."/>
            <person name="Guiseppi G."/>
            <person name="Guy B.J."/>
            <person name="Haga K."/>
            <person name="Haiech J."/>
            <person name="Harwood C.R."/>
            <person name="Henaut A."/>
            <person name="Hilbert H."/>
            <person name="Holsappel S."/>
            <person name="Hosono S."/>
            <person name="Hullo M.-F."/>
            <person name="Itaya M."/>
            <person name="Jones L.-M."/>
            <person name="Joris B."/>
            <person name="Karamata D."/>
            <person name="Kasahara Y."/>
            <person name="Klaerr-Blanchard M."/>
            <person name="Klein C."/>
            <person name="Kobayashi Y."/>
            <person name="Koetter P."/>
            <person name="Koningstein G."/>
            <person name="Krogh S."/>
            <person name="Kumano M."/>
            <person name="Kurita K."/>
            <person name="Lapidus A."/>
            <person name="Lardinois S."/>
            <person name="Lauber J."/>
            <person name="Lazarevic V."/>
            <person name="Lee S.-M."/>
            <person name="Levine A."/>
            <person name="Liu H."/>
            <person name="Masuda S."/>
            <person name="Mauel C."/>
            <person name="Medigue C."/>
            <person name="Medina N."/>
            <person name="Mellado R.P."/>
            <person name="Mizuno M."/>
            <person name="Moestl D."/>
            <person name="Nakai S."/>
            <person name="Noback M."/>
            <person name="Noone D."/>
            <person name="O'Reilly M."/>
            <person name="Ogawa K."/>
            <person name="Ogiwara A."/>
            <person name="Oudega B."/>
            <person name="Park S.-H."/>
            <person name="Parro V."/>
            <person name="Pohl T.M."/>
            <person name="Portetelle D."/>
            <person name="Porwollik S."/>
            <person name="Prescott A.M."/>
            <person name="Presecan E."/>
            <person name="Pujic P."/>
            <person name="Purnelle B."/>
            <person name="Rapoport G."/>
            <person name="Rey M."/>
            <person name="Reynolds S."/>
            <person name="Rieger M."/>
            <person name="Rivolta C."/>
            <person name="Rocha E."/>
            <person name="Roche B."/>
            <person name="Rose M."/>
            <person name="Sadaie Y."/>
            <person name="Sato T."/>
            <person name="Scanlan E."/>
            <person name="Schleich S."/>
            <person name="Schroeter R."/>
            <person name="Scoffone F."/>
            <person name="Sekiguchi J."/>
            <person name="Sekowska A."/>
            <person name="Seror S.J."/>
            <person name="Serror P."/>
            <person name="Shin B.-S."/>
            <person name="Soldo B."/>
            <person name="Sorokin A."/>
            <person name="Tacconi E."/>
            <person name="Takagi T."/>
            <person name="Takahashi H."/>
            <person name="Takemaru K."/>
            <person name="Takeuchi M."/>
            <person name="Tamakoshi A."/>
            <person name="Tanaka T."/>
            <person name="Terpstra P."/>
            <person name="Tognoni A."/>
            <person name="Tosato V."/>
            <person name="Uchiyama S."/>
            <person name="Vandenbol M."/>
            <person name="Vannier F."/>
            <person name="Vassarotti A."/>
            <person name="Viari A."/>
            <person name="Wambutt R."/>
            <person name="Wedler E."/>
            <person name="Wedler H."/>
            <person name="Weitzenegger T."/>
            <person name="Winters P."/>
            <person name="Wipat A."/>
            <person name="Yamamoto H."/>
            <person name="Yamane K."/>
            <person name="Yasumoto K."/>
            <person name="Yata K."/>
            <person name="Yoshida K."/>
            <person name="Yoshikawa H.-F."/>
            <person name="Zumstein E."/>
            <person name="Yoshikawa H."/>
            <person name="Danchin A."/>
        </authorList>
    </citation>
    <scope>NUCLEOTIDE SEQUENCE [LARGE SCALE GENOMIC DNA]</scope>
    <source>
        <strain>168</strain>
    </source>
</reference>
<reference key="3">
    <citation type="journal article" date="2010" name="PLoS Genet.">
        <title>The C-terminal domain of the bacterial SSB protein acts as a DNA maintenance hub at active chromosome replication forks.</title>
        <authorList>
            <person name="Costes A."/>
            <person name="Lecointe F."/>
            <person name="McGovern S."/>
            <person name="Quevillon-Cheruel S."/>
            <person name="Polard P."/>
        </authorList>
    </citation>
    <scope>SUBCELLULAR LOCATION</scope>
    <source>
        <strain>168</strain>
    </source>
</reference>
<reference key="4">
    <citation type="journal article" date="2013" name="Nucleic Acids Res.">
        <title>Insights into the structure and assembly of the Bacillus subtilis clamp-loader complex and its interaction with the replicative helicase.</title>
        <authorList>
            <person name="Afonso J.P."/>
            <person name="Chintakayala K."/>
            <person name="Suwannachart C."/>
            <person name="Sedelnikova S."/>
            <person name="Giles K."/>
            <person name="Hoyes J.B."/>
            <person name="Soultanas P."/>
            <person name="Rafferty J.B."/>
            <person name="Oldham N.J."/>
        </authorList>
    </citation>
    <scope>SUBUNIT</scope>
</reference>
<evidence type="ECO:0000250" key="1">
    <source>
        <dbReference type="UniProtKB" id="P28631"/>
    </source>
</evidence>
<evidence type="ECO:0000269" key="2">
    <source>
    </source>
</evidence>
<evidence type="ECO:0000269" key="3">
    <source>
    </source>
</evidence>